<feature type="chain" id="PRO_0000141018" description="Thymidylate synthase">
    <location>
        <begin position="1"/>
        <end position="318"/>
    </location>
</feature>
<feature type="active site" description="Nucleophile" evidence="1">
    <location>
        <position position="201"/>
    </location>
</feature>
<feature type="binding site" description="in other chain" evidence="1">
    <location>
        <position position="26"/>
    </location>
    <ligand>
        <name>dUMP</name>
        <dbReference type="ChEBI" id="CHEBI:246422"/>
        <note>ligand shared between dimeric partners</note>
    </ligand>
</feature>
<feature type="binding site" evidence="1">
    <location>
        <begin position="181"/>
        <end position="182"/>
    </location>
    <ligand>
        <name>dUMP</name>
        <dbReference type="ChEBI" id="CHEBI:246422"/>
        <note>ligand shared between dimeric partners</note>
    </ligand>
</feature>
<feature type="binding site" description="in other chain" evidence="1">
    <location>
        <begin position="221"/>
        <end position="224"/>
    </location>
    <ligand>
        <name>dUMP</name>
        <dbReference type="ChEBI" id="CHEBI:246422"/>
        <note>ligand shared between dimeric partners</note>
    </ligand>
</feature>
<feature type="binding site" evidence="1">
    <location>
        <position position="224"/>
    </location>
    <ligand>
        <name>(6R)-5,10-methylene-5,6,7,8-tetrahydrofolate</name>
        <dbReference type="ChEBI" id="CHEBI:15636"/>
    </ligand>
</feature>
<feature type="binding site" description="in other chain" evidence="1">
    <location>
        <position position="232"/>
    </location>
    <ligand>
        <name>dUMP</name>
        <dbReference type="ChEBI" id="CHEBI:246422"/>
        <note>ligand shared between dimeric partners</note>
    </ligand>
</feature>
<feature type="binding site" description="in other chain" evidence="1">
    <location>
        <begin position="262"/>
        <end position="264"/>
    </location>
    <ligand>
        <name>dUMP</name>
        <dbReference type="ChEBI" id="CHEBI:246422"/>
        <note>ligand shared between dimeric partners</note>
    </ligand>
</feature>
<feature type="binding site" evidence="1">
    <location>
        <position position="317"/>
    </location>
    <ligand>
        <name>(6R)-5,10-methylene-5,6,7,8-tetrahydrofolate</name>
        <dbReference type="ChEBI" id="CHEBI:15636"/>
    </ligand>
</feature>
<feature type="helix" evidence="2">
    <location>
        <begin position="4"/>
        <end position="19"/>
    </location>
</feature>
<feature type="strand" evidence="2">
    <location>
        <begin position="21"/>
        <end position="23"/>
    </location>
</feature>
<feature type="strand" evidence="2">
    <location>
        <begin position="31"/>
        <end position="42"/>
    </location>
</feature>
<feature type="helix" evidence="2">
    <location>
        <begin position="43"/>
        <end position="45"/>
    </location>
</feature>
<feature type="strand" evidence="2">
    <location>
        <begin position="51"/>
        <end position="53"/>
    </location>
</feature>
<feature type="helix" evidence="2">
    <location>
        <begin position="57"/>
        <end position="69"/>
    </location>
</feature>
<feature type="helix" evidence="2">
    <location>
        <begin position="74"/>
        <end position="78"/>
    </location>
</feature>
<feature type="turn" evidence="2">
    <location>
        <begin position="79"/>
        <end position="81"/>
    </location>
</feature>
<feature type="helix" evidence="2">
    <location>
        <begin position="86"/>
        <end position="93"/>
    </location>
</feature>
<feature type="helix" evidence="2">
    <location>
        <begin position="109"/>
        <end position="113"/>
    </location>
</feature>
<feature type="helix" evidence="2">
    <location>
        <begin position="117"/>
        <end position="134"/>
    </location>
</feature>
<feature type="helix" evidence="2">
    <location>
        <begin position="136"/>
        <end position="142"/>
    </location>
</feature>
<feature type="helix" evidence="2">
    <location>
        <begin position="149"/>
        <end position="154"/>
    </location>
</feature>
<feature type="helix" evidence="2">
    <location>
        <begin position="166"/>
        <end position="176"/>
    </location>
</feature>
<feature type="strand" evidence="2">
    <location>
        <begin position="184"/>
        <end position="186"/>
    </location>
</feature>
<feature type="helix" evidence="2">
    <location>
        <begin position="190"/>
        <end position="192"/>
    </location>
</feature>
<feature type="turn" evidence="2">
    <location>
        <begin position="193"/>
        <end position="195"/>
    </location>
</feature>
<feature type="strand" evidence="2">
    <location>
        <begin position="196"/>
        <end position="198"/>
    </location>
</feature>
<feature type="strand" evidence="2">
    <location>
        <begin position="201"/>
        <end position="210"/>
    </location>
</feature>
<feature type="strand" evidence="2">
    <location>
        <begin position="213"/>
        <end position="224"/>
    </location>
</feature>
<feature type="turn" evidence="2">
    <location>
        <begin position="225"/>
        <end position="227"/>
    </location>
</feature>
<feature type="helix" evidence="2">
    <location>
        <begin position="228"/>
        <end position="246"/>
    </location>
</feature>
<feature type="strand" evidence="2">
    <location>
        <begin position="250"/>
        <end position="264"/>
    </location>
</feature>
<feature type="helix" evidence="2">
    <location>
        <begin position="268"/>
        <end position="276"/>
    </location>
</feature>
<feature type="strand" evidence="2">
    <location>
        <begin position="284"/>
        <end position="287"/>
    </location>
</feature>
<feature type="helix" evidence="2">
    <location>
        <begin position="293"/>
        <end position="295"/>
    </location>
</feature>
<feature type="helix" evidence="2">
    <location>
        <begin position="298"/>
        <end position="300"/>
    </location>
</feature>
<feature type="strand" evidence="2">
    <location>
        <begin position="301"/>
        <end position="305"/>
    </location>
</feature>
<organism>
    <name type="scientific">Staphylococcus aureus (strain Mu50 / ATCC 700699)</name>
    <dbReference type="NCBI Taxonomy" id="158878"/>
    <lineage>
        <taxon>Bacteria</taxon>
        <taxon>Bacillati</taxon>
        <taxon>Bacillota</taxon>
        <taxon>Bacilli</taxon>
        <taxon>Bacillales</taxon>
        <taxon>Staphylococcaceae</taxon>
        <taxon>Staphylococcus</taxon>
    </lineage>
</organism>
<dbReference type="EC" id="2.1.1.45" evidence="1"/>
<dbReference type="EMBL" id="BA000017">
    <property type="protein sequence ID" value="BAB57589.1"/>
    <property type="molecule type" value="Genomic_DNA"/>
</dbReference>
<dbReference type="RefSeq" id="WP_000934894.1">
    <property type="nucleotide sequence ID" value="NC_002758.2"/>
</dbReference>
<dbReference type="PDB" id="4DQ1">
    <property type="method" value="X-ray"/>
    <property type="resolution" value="2.71 A"/>
    <property type="chains" value="A/B=1-318"/>
</dbReference>
<dbReference type="PDBsum" id="4DQ1"/>
<dbReference type="SMR" id="P67046"/>
<dbReference type="KEGG" id="sav:SAV1427"/>
<dbReference type="HOGENOM" id="CLU_021669_0_2_9"/>
<dbReference type="PhylomeDB" id="P67046"/>
<dbReference type="UniPathway" id="UPA00575"/>
<dbReference type="EvolutionaryTrace" id="P67046"/>
<dbReference type="Proteomes" id="UP000002481">
    <property type="component" value="Chromosome"/>
</dbReference>
<dbReference type="GO" id="GO:0005829">
    <property type="term" value="C:cytosol"/>
    <property type="evidence" value="ECO:0007669"/>
    <property type="project" value="TreeGrafter"/>
</dbReference>
<dbReference type="GO" id="GO:0004799">
    <property type="term" value="F:thymidylate synthase activity"/>
    <property type="evidence" value="ECO:0007669"/>
    <property type="project" value="UniProtKB-UniRule"/>
</dbReference>
<dbReference type="GO" id="GO:0006231">
    <property type="term" value="P:dTMP biosynthetic process"/>
    <property type="evidence" value="ECO:0007669"/>
    <property type="project" value="UniProtKB-UniRule"/>
</dbReference>
<dbReference type="GO" id="GO:0006235">
    <property type="term" value="P:dTTP biosynthetic process"/>
    <property type="evidence" value="ECO:0007669"/>
    <property type="project" value="UniProtKB-UniRule"/>
</dbReference>
<dbReference type="GO" id="GO:0032259">
    <property type="term" value="P:methylation"/>
    <property type="evidence" value="ECO:0007669"/>
    <property type="project" value="UniProtKB-KW"/>
</dbReference>
<dbReference type="CDD" id="cd00351">
    <property type="entry name" value="TS_Pyrimidine_HMase"/>
    <property type="match status" value="1"/>
</dbReference>
<dbReference type="Gene3D" id="3.30.572.10">
    <property type="entry name" value="Thymidylate synthase/dCMP hydroxymethylase domain"/>
    <property type="match status" value="1"/>
</dbReference>
<dbReference type="HAMAP" id="MF_00008">
    <property type="entry name" value="Thymidy_synth_bact"/>
    <property type="match status" value="1"/>
</dbReference>
<dbReference type="InterPro" id="IPR045097">
    <property type="entry name" value="Thymidate_synth/dCMP_Mease"/>
</dbReference>
<dbReference type="InterPro" id="IPR023451">
    <property type="entry name" value="Thymidate_synth/dCMP_Mease_dom"/>
</dbReference>
<dbReference type="InterPro" id="IPR036926">
    <property type="entry name" value="Thymidate_synth/dCMP_Mease_sf"/>
</dbReference>
<dbReference type="InterPro" id="IPR000398">
    <property type="entry name" value="Thymidylate_synthase"/>
</dbReference>
<dbReference type="InterPro" id="IPR020940">
    <property type="entry name" value="Thymidylate_synthase_AS"/>
</dbReference>
<dbReference type="NCBIfam" id="NF002496">
    <property type="entry name" value="PRK01827.1-2"/>
    <property type="match status" value="1"/>
</dbReference>
<dbReference type="NCBIfam" id="TIGR03284">
    <property type="entry name" value="thym_sym"/>
    <property type="match status" value="1"/>
</dbReference>
<dbReference type="PANTHER" id="PTHR11548:SF9">
    <property type="entry name" value="THYMIDYLATE SYNTHASE"/>
    <property type="match status" value="1"/>
</dbReference>
<dbReference type="PANTHER" id="PTHR11548">
    <property type="entry name" value="THYMIDYLATE SYNTHASE 1"/>
    <property type="match status" value="1"/>
</dbReference>
<dbReference type="Pfam" id="PF00303">
    <property type="entry name" value="Thymidylat_synt"/>
    <property type="match status" value="1"/>
</dbReference>
<dbReference type="PRINTS" id="PR00108">
    <property type="entry name" value="THYMDSNTHASE"/>
</dbReference>
<dbReference type="SUPFAM" id="SSF55831">
    <property type="entry name" value="Thymidylate synthase/dCMP hydroxymethylase"/>
    <property type="match status" value="1"/>
</dbReference>
<dbReference type="PROSITE" id="PS00091">
    <property type="entry name" value="THYMIDYLATE_SYNTHASE"/>
    <property type="match status" value="1"/>
</dbReference>
<keyword id="KW-0002">3D-structure</keyword>
<keyword id="KW-0963">Cytoplasm</keyword>
<keyword id="KW-0489">Methyltransferase</keyword>
<keyword id="KW-0545">Nucleotide biosynthesis</keyword>
<keyword id="KW-0808">Transferase</keyword>
<name>TYSY_STAAM</name>
<proteinExistence type="evidence at protein level"/>
<comment type="function">
    <text evidence="1">Catalyzes the reductive methylation of 2'-deoxyuridine-5'-monophosphate (dUMP) to 2'-deoxythymidine-5'-monophosphate (dTMP) while utilizing 5,10-methylenetetrahydrofolate (mTHF) as the methyl donor and reductant in the reaction, yielding dihydrofolate (DHF) as a by-product. This enzymatic reaction provides an intracellular de novo source of dTMP, an essential precursor for DNA biosynthesis.</text>
</comment>
<comment type="catalytic activity">
    <reaction evidence="1">
        <text>dUMP + (6R)-5,10-methylene-5,6,7,8-tetrahydrofolate = 7,8-dihydrofolate + dTMP</text>
        <dbReference type="Rhea" id="RHEA:12104"/>
        <dbReference type="ChEBI" id="CHEBI:15636"/>
        <dbReference type="ChEBI" id="CHEBI:57451"/>
        <dbReference type="ChEBI" id="CHEBI:63528"/>
        <dbReference type="ChEBI" id="CHEBI:246422"/>
        <dbReference type="EC" id="2.1.1.45"/>
    </reaction>
</comment>
<comment type="pathway">
    <text evidence="1">Pyrimidine metabolism; dTTP biosynthesis.</text>
</comment>
<comment type="subunit">
    <text evidence="1">Homodimer.</text>
</comment>
<comment type="subcellular location">
    <subcellularLocation>
        <location evidence="1">Cytoplasm</location>
    </subcellularLocation>
</comment>
<comment type="similarity">
    <text evidence="1">Belongs to the thymidylate synthase family. Bacterial-type ThyA subfamily.</text>
</comment>
<accession>P67046</accession>
<accession>Q99U61</accession>
<sequence>MLNSFDAAYHSLCEEVLEIGNTRNDRTNTGTISKFGHQLRFDLSKGFPLLTTKKVSFKLVATELLWFIKGDTNIQYLLKYNNNIWNEWAFENYIKSDEYNGPDMTDFGHRALSDPEFNEQYKEQMKQFKQRILEDDTFAKQFGDLGNVYGKQWRDWVDKDGNHFDQLKTVIEQIKHNPDSRRHIVSAWNPTEIDTMALPPCHTMFQFYVQDGKLSCQLYQRSADIFLGVPFNIASYALLTHLIAKECGLEVGEFVHTFGDAHIYSNHIDAIQTQLARESFNPPTLKINSDKSIFDINYEDLEIVDYESHPAIKAPIAV</sequence>
<reference key="1">
    <citation type="journal article" date="2001" name="Lancet">
        <title>Whole genome sequencing of meticillin-resistant Staphylococcus aureus.</title>
        <authorList>
            <person name="Kuroda M."/>
            <person name="Ohta T."/>
            <person name="Uchiyama I."/>
            <person name="Baba T."/>
            <person name="Yuzawa H."/>
            <person name="Kobayashi I."/>
            <person name="Cui L."/>
            <person name="Oguchi A."/>
            <person name="Aoki K."/>
            <person name="Nagai Y."/>
            <person name="Lian J.-Q."/>
            <person name="Ito T."/>
            <person name="Kanamori M."/>
            <person name="Matsumaru H."/>
            <person name="Maruyama A."/>
            <person name="Murakami H."/>
            <person name="Hosoyama A."/>
            <person name="Mizutani-Ui Y."/>
            <person name="Takahashi N.K."/>
            <person name="Sawano T."/>
            <person name="Inoue R."/>
            <person name="Kaito C."/>
            <person name="Sekimizu K."/>
            <person name="Hirakawa H."/>
            <person name="Kuhara S."/>
            <person name="Goto S."/>
            <person name="Yabuzaki J."/>
            <person name="Kanehisa M."/>
            <person name="Yamashita A."/>
            <person name="Oshima K."/>
            <person name="Furuya K."/>
            <person name="Yoshino C."/>
            <person name="Shiba T."/>
            <person name="Hattori M."/>
            <person name="Ogasawara N."/>
            <person name="Hayashi H."/>
            <person name="Hiramatsu K."/>
        </authorList>
    </citation>
    <scope>NUCLEOTIDE SEQUENCE [LARGE SCALE GENOMIC DNA]</scope>
    <source>
        <strain>Mu50 / ATCC 700699</strain>
    </source>
</reference>
<evidence type="ECO:0000255" key="1">
    <source>
        <dbReference type="HAMAP-Rule" id="MF_00008"/>
    </source>
</evidence>
<evidence type="ECO:0007829" key="2">
    <source>
        <dbReference type="PDB" id="4DQ1"/>
    </source>
</evidence>
<protein>
    <recommendedName>
        <fullName evidence="1">Thymidylate synthase</fullName>
        <shortName evidence="1">TS</shortName>
        <shortName evidence="1">TSase</shortName>
        <ecNumber evidence="1">2.1.1.45</ecNumber>
    </recommendedName>
</protein>
<gene>
    <name evidence="1" type="primary">thyA</name>
    <name type="ordered locus">SAV1427</name>
</gene>